<sequence length="118" mass="11795">MSCQQSQQQCQPPPKCTPKCPPKCTPKCPPKCPPKCPPQCSAPCPPPVSSCCGSSSGGCCSSEGGGCCLSHHRPRQSLRRRPQSSSCCGSGSGQQSGGSSCCHSSGGSGCCHSSGGCC</sequence>
<evidence type="ECO:0000256" key="1">
    <source>
        <dbReference type="SAM" id="MobiDB-lite"/>
    </source>
</evidence>
<evidence type="ECO:0000269" key="2">
    <source>
    </source>
</evidence>
<evidence type="ECO:0000269" key="3">
    <source>
    </source>
</evidence>
<evidence type="ECO:0000305" key="4"/>
<comment type="function">
    <text>Precursors of the cornified envelope of the stratum corneum.</text>
</comment>
<comment type="subunit">
    <text evidence="3">Interacts with CYSRT1; the interaction is direct.</text>
</comment>
<comment type="interaction">
    <interactant intactId="EBI-11955689">
        <id>Q5TCM9</id>
    </interactant>
    <interactant intactId="EBI-12006944">
        <id>O43184-4</id>
        <label>ADAM12</label>
    </interactant>
    <organismsDiffer>false</organismsDiffer>
    <experiments>3</experiments>
</comment>
<comment type="interaction">
    <interactant intactId="EBI-11955689">
        <id>Q5TCM9</id>
    </interactant>
    <interactant intactId="EBI-1211484">
        <id>P05187</id>
        <label>ALPP</label>
    </interactant>
    <organismsDiffer>false</organismsDiffer>
    <experiments>3</experiments>
</comment>
<comment type="interaction">
    <interactant intactId="EBI-11955689">
        <id>Q5TCM9</id>
    </interactant>
    <interactant intactId="EBI-741528">
        <id>Q9UKJ5</id>
        <label>CHIC2</label>
    </interactant>
    <organismsDiffer>false</organismsDiffer>
    <experiments>3</experiments>
</comment>
<comment type="interaction">
    <interactant intactId="EBI-11955689">
        <id>Q5TCM9</id>
    </interactant>
    <interactant intactId="EBI-947551">
        <id>Q9H2X0</id>
        <label>CHRD</label>
    </interactant>
    <organismsDiffer>false</organismsDiffer>
    <experiments>3</experiments>
</comment>
<comment type="interaction">
    <interactant intactId="EBI-11955689">
        <id>Q5TCM9</id>
    </interactant>
    <interactant intactId="EBI-10192698">
        <id>Q02930-3</id>
        <label>CREB5</label>
    </interactant>
    <organismsDiffer>false</organismsDiffer>
    <experiments>3</experiments>
</comment>
<comment type="interaction">
    <interactant intactId="EBI-11955689">
        <id>Q5TCM9</id>
    </interactant>
    <interactant intactId="EBI-14156412">
        <id>Q08AG9</id>
        <label>CYP21A2</label>
    </interactant>
    <organismsDiffer>false</organismsDiffer>
    <experiments>3</experiments>
</comment>
<comment type="interaction">
    <interactant intactId="EBI-11955689">
        <id>Q5TCM9</id>
    </interactant>
    <interactant intactId="EBI-3867333">
        <id>A8MQ03</id>
        <label>CYSRT1</label>
    </interactant>
    <organismsDiffer>false</organismsDiffer>
    <experiments>6</experiments>
</comment>
<comment type="interaction">
    <interactant intactId="EBI-11955689">
        <id>Q5TCM9</id>
    </interactant>
    <interactant intactId="EBI-11956479">
        <id>P23142-4</id>
        <label>FBLN1</label>
    </interactant>
    <organismsDiffer>false</organismsDiffer>
    <experiments>3</experiments>
</comment>
<comment type="interaction">
    <interactant intactId="EBI-11955689">
        <id>Q5TCM9</id>
    </interactant>
    <interactant intactId="EBI-740785">
        <id>P49639</id>
        <label>HOXA1</label>
    </interactant>
    <organismsDiffer>false</organismsDiffer>
    <experiments>8</experiments>
</comment>
<comment type="interaction">
    <interactant intactId="EBI-11955689">
        <id>Q5TCM9</id>
    </interactant>
    <interactant intactId="EBI-11959885">
        <id>Q07627</id>
        <label>KRTAP1-1</label>
    </interactant>
    <organismsDiffer>false</organismsDiffer>
    <experiments>3</experiments>
</comment>
<comment type="interaction">
    <interactant intactId="EBI-11955689">
        <id>Q5TCM9</id>
    </interactant>
    <interactant intactId="EBI-11749135">
        <id>Q8IUG1</id>
        <label>KRTAP1-3</label>
    </interactant>
    <organismsDiffer>false</organismsDiffer>
    <experiments>3</experiments>
</comment>
<comment type="interaction">
    <interactant intactId="EBI-11955689">
        <id>Q5TCM9</id>
    </interactant>
    <interactant intactId="EBI-11741292">
        <id>Q9BYS1</id>
        <label>KRTAP1-5</label>
    </interactant>
    <organismsDiffer>false</organismsDiffer>
    <experiments>3</experiments>
</comment>
<comment type="interaction">
    <interactant intactId="EBI-11955689">
        <id>Q5TCM9</id>
    </interactant>
    <interactant intactId="EBI-10172150">
        <id>P60370</id>
        <label>KRTAP10-5</label>
    </interactant>
    <organismsDiffer>false</organismsDiffer>
    <experiments>3</experiments>
</comment>
<comment type="interaction">
    <interactant intactId="EBI-11955689">
        <id>Q5TCM9</id>
    </interactant>
    <interactant intactId="EBI-10172290">
        <id>P60409</id>
        <label>KRTAP10-7</label>
    </interactant>
    <organismsDiffer>false</organismsDiffer>
    <experiments>3</experiments>
</comment>
<comment type="interaction">
    <interactant intactId="EBI-11955689">
        <id>Q5TCM9</id>
    </interactant>
    <interactant intactId="EBI-10171774">
        <id>P60410</id>
        <label>KRTAP10-8</label>
    </interactant>
    <organismsDiffer>false</organismsDiffer>
    <experiments>5</experiments>
</comment>
<comment type="interaction">
    <interactant intactId="EBI-11955689">
        <id>Q5TCM9</id>
    </interactant>
    <interactant intactId="EBI-10172052">
        <id>P60411</id>
        <label>KRTAP10-9</label>
    </interactant>
    <organismsDiffer>false</organismsDiffer>
    <experiments>4</experiments>
</comment>
<comment type="interaction">
    <interactant intactId="EBI-11955689">
        <id>Q5TCM9</id>
    </interactant>
    <interactant intactId="EBI-11953334">
        <id>P60328</id>
        <label>KRTAP12-3</label>
    </interactant>
    <organismsDiffer>false</organismsDiffer>
    <experiments>3</experiments>
</comment>
<comment type="interaction">
    <interactant intactId="EBI-11955689">
        <id>Q5TCM9</id>
    </interactant>
    <interactant intactId="EBI-10176396">
        <id>P60329</id>
        <label>KRTAP12-4</label>
    </interactant>
    <organismsDiffer>false</organismsDiffer>
    <experiments>3</experiments>
</comment>
<comment type="interaction">
    <interactant intactId="EBI-11955689">
        <id>Q5TCM9</id>
    </interactant>
    <interactant intactId="EBI-18395721">
        <id>Q3LI59</id>
        <label>KRTAP21-2</label>
    </interactant>
    <organismsDiffer>false</organismsDiffer>
    <experiments>3</experiments>
</comment>
<comment type="interaction">
    <interactant intactId="EBI-11955689">
        <id>Q5TCM9</id>
    </interactant>
    <interactant intactId="EBI-9996449">
        <id>Q9BYR8</id>
        <label>KRTAP3-1</label>
    </interactant>
    <organismsDiffer>false</organismsDiffer>
    <experiments>3</experiments>
</comment>
<comment type="interaction">
    <interactant intactId="EBI-11955689">
        <id>Q5TCM9</id>
    </interactant>
    <interactant intactId="EBI-34579671">
        <id>Q9BYQ7</id>
        <label>KRTAP4-1</label>
    </interactant>
    <organismsDiffer>false</organismsDiffer>
    <experiments>3</experiments>
</comment>
<comment type="interaction">
    <interactant intactId="EBI-11955689">
        <id>Q5TCM9</id>
    </interactant>
    <interactant intactId="EBI-10302392">
        <id>Q9BYQ6</id>
        <label>KRTAP4-11</label>
    </interactant>
    <organismsDiffer>false</organismsDiffer>
    <experiments>6</experiments>
</comment>
<comment type="interaction">
    <interactant intactId="EBI-11955689">
        <id>Q5TCM9</id>
    </interactant>
    <interactant intactId="EBI-739863">
        <id>Q9BQ66</id>
        <label>KRTAP4-12</label>
    </interactant>
    <organismsDiffer>false</organismsDiffer>
    <experiments>9</experiments>
</comment>
<comment type="interaction">
    <interactant intactId="EBI-11955689">
        <id>Q5TCM9</id>
    </interactant>
    <interactant intactId="EBI-10172511">
        <id>Q9BYR5</id>
        <label>KRTAP4-2</label>
    </interactant>
    <organismsDiffer>false</organismsDiffer>
    <experiments>3</experiments>
</comment>
<comment type="interaction">
    <interactant intactId="EBI-11955689">
        <id>Q5TCM9</id>
    </interactant>
    <interactant intactId="EBI-11958132">
        <id>Q9BYR3</id>
        <label>KRTAP4-4</label>
    </interactant>
    <organismsDiffer>false</organismsDiffer>
    <experiments>6</experiments>
</comment>
<comment type="interaction">
    <interactant intactId="EBI-11955689">
        <id>Q5TCM9</id>
    </interactant>
    <interactant intactId="EBI-11993254">
        <id>Q9BYR2</id>
        <label>KRTAP4-5</label>
    </interactant>
    <organismsDiffer>false</organismsDiffer>
    <experiments>3</experiments>
</comment>
<comment type="interaction">
    <interactant intactId="EBI-11955689">
        <id>Q5TCM9</id>
    </interactant>
    <interactant intactId="EBI-11993296">
        <id>Q6L8G4</id>
        <label>KRTAP5-11</label>
    </interactant>
    <organismsDiffer>false</organismsDiffer>
    <experiments>3</experiments>
</comment>
<comment type="interaction">
    <interactant intactId="EBI-11955689">
        <id>Q5TCM9</id>
    </interactant>
    <interactant intactId="EBI-11958178">
        <id>Q701N4</id>
        <label>KRTAP5-2</label>
    </interactant>
    <organismsDiffer>false</organismsDiffer>
    <experiments>5</experiments>
</comment>
<comment type="interaction">
    <interactant intactId="EBI-11955689">
        <id>Q5TCM9</id>
    </interactant>
    <interactant intactId="EBI-11974251">
        <id>Q6L8H2</id>
        <label>KRTAP5-3</label>
    </interactant>
    <organismsDiffer>false</organismsDiffer>
    <experiments>4</experiments>
</comment>
<comment type="interaction">
    <interactant intactId="EBI-11955689">
        <id>Q5TCM9</id>
    </interactant>
    <interactant intactId="EBI-11963072">
        <id>Q6L8H1</id>
        <label>KRTAP5-4</label>
    </interactant>
    <organismsDiffer>false</organismsDiffer>
    <experiments>4</experiments>
</comment>
<comment type="interaction">
    <interactant intactId="EBI-11955689">
        <id>Q5TCM9</id>
    </interactant>
    <interactant intactId="EBI-10250562">
        <id>Q6L8G9</id>
        <label>KRTAP5-6</label>
    </interactant>
    <organismsDiffer>false</organismsDiffer>
    <experiments>5</experiments>
</comment>
<comment type="interaction">
    <interactant intactId="EBI-11955689">
        <id>Q5TCM9</id>
    </interactant>
    <interactant intactId="EBI-3958099">
        <id>P26371</id>
        <label>KRTAP5-9</label>
    </interactant>
    <organismsDiffer>false</organismsDiffer>
    <experiments>6</experiments>
</comment>
<comment type="interaction">
    <interactant intactId="EBI-11955689">
        <id>Q5TCM9</id>
    </interactant>
    <interactant intactId="EBI-11962084">
        <id>Q3LI66</id>
        <label>KRTAP6-2</label>
    </interactant>
    <organismsDiffer>false</organismsDiffer>
    <experiments>3</experiments>
</comment>
<comment type="interaction">
    <interactant intactId="EBI-11955689">
        <id>Q5TCM9</id>
    </interactant>
    <interactant intactId="EBI-22311199">
        <id>Q3LI67</id>
        <label>KRTAP6-3</label>
    </interactant>
    <organismsDiffer>false</organismsDiffer>
    <experiments>3</experiments>
</comment>
<comment type="interaction">
    <interactant intactId="EBI-11955689">
        <id>Q5TCM9</id>
    </interactant>
    <interactant intactId="EBI-1044640">
        <id>Q9BYQ4</id>
        <label>KRTAP9-2</label>
    </interactant>
    <organismsDiffer>false</organismsDiffer>
    <experiments>8</experiments>
</comment>
<comment type="interaction">
    <interactant intactId="EBI-11955689">
        <id>Q5TCM9</id>
    </interactant>
    <interactant intactId="EBI-1043191">
        <id>Q9BYQ3</id>
        <label>KRTAP9-3</label>
    </interactant>
    <organismsDiffer>false</organismsDiffer>
    <experiments>6</experiments>
</comment>
<comment type="interaction">
    <interactant intactId="EBI-11955689">
        <id>Q5TCM9</id>
    </interactant>
    <interactant intactId="EBI-11962058">
        <id>Q5T7P2</id>
        <label>LCE1A</label>
    </interactant>
    <organismsDiffer>false</organismsDiffer>
    <experiments>3</experiments>
</comment>
<comment type="interaction">
    <interactant intactId="EBI-11955689">
        <id>Q5TCM9</id>
    </interactant>
    <interactant intactId="EBI-10245913">
        <id>Q5T7P3</id>
        <label>LCE1B</label>
    </interactant>
    <organismsDiffer>false</organismsDiffer>
    <experiments>3</experiments>
</comment>
<comment type="interaction">
    <interactant intactId="EBI-11955689">
        <id>Q5TCM9</id>
    </interactant>
    <interactant intactId="EBI-12224199">
        <id>Q5T751</id>
        <label>LCE1C</label>
    </interactant>
    <organismsDiffer>false</organismsDiffer>
    <experiments>3</experiments>
</comment>
<comment type="interaction">
    <interactant intactId="EBI-11955689">
        <id>Q5TCM9</id>
    </interactant>
    <interactant intactId="EBI-11955335">
        <id>Q5T753</id>
        <label>LCE1E</label>
    </interactant>
    <organismsDiffer>false</organismsDiffer>
    <experiments>3</experiments>
</comment>
<comment type="interaction">
    <interactant intactId="EBI-11955689">
        <id>Q5TCM9</id>
    </interactant>
    <interactant intactId="EBI-11958008">
        <id>Q5T754</id>
        <label>LCE1F</label>
    </interactant>
    <organismsDiffer>false</organismsDiffer>
    <experiments>3</experiments>
</comment>
<comment type="interaction">
    <interactant intactId="EBI-11955689">
        <id>Q5TCM9</id>
    </interactant>
    <interactant intactId="EBI-11478468">
        <id>O14633</id>
        <label>LCE2B</label>
    </interactant>
    <organismsDiffer>false</organismsDiffer>
    <experiments>3</experiments>
</comment>
<comment type="interaction">
    <interactant intactId="EBI-11955689">
        <id>Q5TCM9</id>
    </interactant>
    <interactant intactId="EBI-11973993">
        <id>Q5TA81</id>
        <label>LCE2C</label>
    </interactant>
    <organismsDiffer>false</organismsDiffer>
    <experiments>6</experiments>
</comment>
<comment type="interaction">
    <interactant intactId="EBI-11955689">
        <id>Q5TCM9</id>
    </interactant>
    <interactant intactId="EBI-10246358">
        <id>Q5TA78</id>
        <label>LCE4A</label>
    </interactant>
    <organismsDiffer>false</organismsDiffer>
    <experiments>3</experiments>
</comment>
<comment type="interaction">
    <interactant intactId="EBI-11955689">
        <id>Q5TCM9</id>
    </interactant>
    <interactant intactId="EBI-11955689">
        <id>Q5TCM9</id>
        <label>LCE5A</label>
    </interactant>
    <organismsDiffer>false</organismsDiffer>
    <experiments>4</experiments>
</comment>
<comment type="interaction">
    <interactant intactId="EBI-11955689">
        <id>Q5TCM9</id>
    </interactant>
    <interactant intactId="EBI-6979889">
        <id>Q92692-2</id>
        <label>NECTIN2</label>
    </interactant>
    <organismsDiffer>false</organismsDiffer>
    <experiments>3</experiments>
</comment>
<comment type="interaction">
    <interactant intactId="EBI-11955689">
        <id>Q5TCM9</id>
    </interactant>
    <interactant intactId="EBI-22310682">
        <id>P0DPK4</id>
        <label>NOTCH2NLC</label>
    </interactant>
    <organismsDiffer>false</organismsDiffer>
    <experiments>3</experiments>
</comment>
<comment type="interaction">
    <interactant intactId="EBI-11955689">
        <id>Q5TCM9</id>
    </interactant>
    <interactant intactId="EBI-741158">
        <id>Q96HA8</id>
        <label>NTAQ1</label>
    </interactant>
    <organismsDiffer>false</organismsDiffer>
    <experiments>3</experiments>
</comment>
<comment type="interaction">
    <interactant intactId="EBI-11955689">
        <id>Q5TCM9</id>
    </interactant>
    <interactant intactId="EBI-591778">
        <id>P61970</id>
        <label>NUTF2</label>
    </interactant>
    <organismsDiffer>false</organismsDiffer>
    <experiments>3</experiments>
</comment>
<comment type="interaction">
    <interactant intactId="EBI-11955689">
        <id>Q5TCM9</id>
    </interactant>
    <interactant intactId="EBI-3937430">
        <id>Q9NRY7</id>
        <label>PLSCR2</label>
    </interactant>
    <organismsDiffer>false</organismsDiffer>
    <experiments>3</experiments>
</comment>
<comment type="interaction">
    <interactant intactId="EBI-11955689">
        <id>Q5TCM9</id>
    </interactant>
    <interactant intactId="EBI-750734">
        <id>Q9NRY6</id>
        <label>PLSCR3</label>
    </interactant>
    <organismsDiffer>false</organismsDiffer>
    <experiments>6</experiments>
</comment>
<comment type="interaction">
    <interactant intactId="EBI-11955689">
        <id>Q5TCM9</id>
    </interactant>
    <interactant intactId="EBI-769257">
        <id>Q9NRQ2</id>
        <label>PLSCR4</label>
    </interactant>
    <organismsDiffer>false</organismsDiffer>
    <experiments>3</experiments>
</comment>
<comment type="interaction">
    <interactant intactId="EBI-11955689">
        <id>Q5TCM9</id>
    </interactant>
    <interactant intactId="EBI-17236143">
        <id>Q12837</id>
        <label>POU4F2</label>
    </interactant>
    <organismsDiffer>false</organismsDiffer>
    <experiments>3</experiments>
</comment>
<comment type="interaction">
    <interactant intactId="EBI-11955689">
        <id>Q5TCM9</id>
    </interactant>
    <interactant intactId="EBI-3918154">
        <id>Q9UGC6</id>
        <label>RGS17</label>
    </interactant>
    <organismsDiffer>false</organismsDiffer>
    <experiments>5</experiments>
</comment>
<comment type="interaction">
    <interactant intactId="EBI-11955689">
        <id>Q5TCM9</id>
    </interactant>
    <interactant intactId="EBI-10178530">
        <id>O76081-6</id>
        <label>RGS20</label>
    </interactant>
    <organismsDiffer>false</organismsDiffer>
    <experiments>3</experiments>
</comment>
<comment type="interaction">
    <interactant intactId="EBI-11955689">
        <id>Q5TCM9</id>
    </interactant>
    <interactant intactId="EBI-2340927">
        <id>P78317</id>
        <label>RNF4</label>
    </interactant>
    <organismsDiffer>false</organismsDiffer>
    <experiments>3</experiments>
</comment>
<comment type="interaction">
    <interactant intactId="EBI-11955689">
        <id>Q5TCM9</id>
    </interactant>
    <interactant intactId="EBI-1051105">
        <id>Q92504</id>
        <label>SLC39A7</label>
    </interactant>
    <organismsDiffer>false</organismsDiffer>
    <experiments>3</experiments>
</comment>
<comment type="interaction">
    <interactant intactId="EBI-11955689">
        <id>Q5TCM9</id>
    </interactant>
    <interactant intactId="EBI-750494">
        <id>P49901</id>
        <label>SMCP</label>
    </interactant>
    <organismsDiffer>false</organismsDiffer>
    <experiments>3</experiments>
</comment>
<comment type="interaction">
    <interactant intactId="EBI-11955689">
        <id>Q5TCM9</id>
    </interactant>
    <interactant intactId="EBI-7082156">
        <id>Q7Z698</id>
        <label>SPRED2</label>
    </interactant>
    <organismsDiffer>false</organismsDiffer>
    <experiments>3</experiments>
</comment>
<comment type="interaction">
    <interactant intactId="EBI-11955689">
        <id>Q5TCM9</id>
    </interactant>
    <interactant intactId="EBI-3866665">
        <id>O43609</id>
        <label>SPRY1</label>
    </interactant>
    <organismsDiffer>false</organismsDiffer>
    <experiments>3</experiments>
</comment>
<comment type="interaction">
    <interactant intactId="EBI-11955689">
        <id>Q5TCM9</id>
    </interactant>
    <interactant intactId="EBI-5235829">
        <id>Q8IWZ5</id>
        <label>TRIM42</label>
    </interactant>
    <organismsDiffer>false</organismsDiffer>
    <experiments>5</experiments>
</comment>
<comment type="interaction">
    <interactant intactId="EBI-11955689">
        <id>Q5TCM9</id>
    </interactant>
    <interactant intactId="EBI-10180829">
        <id>Q7KZS0</id>
        <label>UBE2I</label>
    </interactant>
    <organismsDiffer>false</organismsDiffer>
    <experiments>3</experiments>
</comment>
<comment type="interaction">
    <interactant intactId="EBI-11955689">
        <id>Q5TCM9</id>
    </interactant>
    <interactant intactId="EBI-11747707">
        <id>B2RUY7</id>
        <label>VWC2L</label>
    </interactant>
    <organismsDiffer>false</organismsDiffer>
    <experiments>3</experiments>
</comment>
<comment type="interaction">
    <interactant intactId="EBI-11955689">
        <id>Q5TCM9</id>
    </interactant>
    <interactant intactId="EBI-625509">
        <id>Q8N720</id>
        <label>ZNF655</label>
    </interactant>
    <organismsDiffer>false</organismsDiffer>
    <experiments>3</experiments>
</comment>
<comment type="interaction">
    <interactant intactId="EBI-11955689">
        <id>Q5TCM9</id>
    </interactant>
    <interactant intactId="EBI-750454">
        <id>Q96EJ4</id>
    </interactant>
    <organismsDiffer>false</organismsDiffer>
    <experiments>3</experiments>
</comment>
<comment type="tissue specificity">
    <text evidence="2">Skin-specific. Expression was readily detected in adult trunk skin, adult arm skin, fetal skin, penal skin, vulva, esophagus and tongue. Not expressed in the cervix, rectum, lung, colon, or placenta. Expression is observed in the heart.</text>
</comment>
<comment type="miscellaneous">
    <text>Belongs to the LCE cluster present on 1q21.</text>
</comment>
<comment type="similarity">
    <text evidence="4">Belongs to the LCE family.</text>
</comment>
<organism>
    <name type="scientific">Homo sapiens</name>
    <name type="common">Human</name>
    <dbReference type="NCBI Taxonomy" id="9606"/>
    <lineage>
        <taxon>Eukaryota</taxon>
        <taxon>Metazoa</taxon>
        <taxon>Chordata</taxon>
        <taxon>Craniata</taxon>
        <taxon>Vertebrata</taxon>
        <taxon>Euteleostomi</taxon>
        <taxon>Mammalia</taxon>
        <taxon>Eutheria</taxon>
        <taxon>Euarchontoglires</taxon>
        <taxon>Primates</taxon>
        <taxon>Haplorrhini</taxon>
        <taxon>Catarrhini</taxon>
        <taxon>Hominidae</taxon>
        <taxon>Homo</taxon>
    </lineage>
</organism>
<name>LCE5A_HUMAN</name>
<feature type="chain" id="PRO_0000235339" description="Late cornified envelope protein 5A">
    <location>
        <begin position="1"/>
        <end position="118"/>
    </location>
</feature>
<feature type="region of interest" description="Disordered" evidence="1">
    <location>
        <begin position="1"/>
        <end position="32"/>
    </location>
</feature>
<feature type="region of interest" description="Disordered" evidence="1">
    <location>
        <begin position="72"/>
        <end position="118"/>
    </location>
</feature>
<feature type="compositionally biased region" description="Low complexity" evidence="1">
    <location>
        <begin position="1"/>
        <end position="10"/>
    </location>
</feature>
<feature type="compositionally biased region" description="Pro residues" evidence="1">
    <location>
        <begin position="11"/>
        <end position="32"/>
    </location>
</feature>
<feature type="compositionally biased region" description="Basic residues" evidence="1">
    <location>
        <begin position="72"/>
        <end position="82"/>
    </location>
</feature>
<feature type="compositionally biased region" description="Low complexity" evidence="1">
    <location>
        <begin position="97"/>
        <end position="118"/>
    </location>
</feature>
<feature type="sequence variant" id="VAR_053487" description="In dbSNP:rs2105117.">
    <original>C</original>
    <variation>Y</variation>
    <location>
        <position position="40"/>
    </location>
</feature>
<proteinExistence type="evidence at protein level"/>
<protein>
    <recommendedName>
        <fullName>Late cornified envelope protein 5A</fullName>
    </recommendedName>
    <alternativeName>
        <fullName>Late envelope protein 18</fullName>
    </alternativeName>
    <alternativeName>
        <fullName>Small proline-rich-like epidermal differentiation complex protein 5A</fullName>
    </alternativeName>
</protein>
<dbReference type="EMBL" id="AL135842">
    <property type="status" value="NOT_ANNOTATED_CDS"/>
    <property type="molecule type" value="Genomic_DNA"/>
</dbReference>
<dbReference type="CCDS" id="CCDS1011.1"/>
<dbReference type="RefSeq" id="NP_848525.1">
    <property type="nucleotide sequence ID" value="NM_178438.5"/>
</dbReference>
<dbReference type="BioGRID" id="129059">
    <property type="interactions" value="90"/>
</dbReference>
<dbReference type="FunCoup" id="Q5TCM9">
    <property type="interactions" value="33"/>
</dbReference>
<dbReference type="IntAct" id="Q5TCM9">
    <property type="interactions" value="64"/>
</dbReference>
<dbReference type="STRING" id="9606.ENSP00000333952"/>
<dbReference type="BioMuta" id="LCE5A"/>
<dbReference type="MassIVE" id="Q5TCM9"/>
<dbReference type="PaxDb" id="9606-ENSP00000333952"/>
<dbReference type="PeptideAtlas" id="Q5TCM9"/>
<dbReference type="DNASU" id="254910"/>
<dbReference type="Ensembl" id="ENST00000334269.3">
    <property type="protein sequence ID" value="ENSP00000333952.2"/>
    <property type="gene ID" value="ENSG00000186207.5"/>
</dbReference>
<dbReference type="GeneID" id="254910"/>
<dbReference type="KEGG" id="hsa:254910"/>
<dbReference type="MANE-Select" id="ENST00000334269.3">
    <property type="protein sequence ID" value="ENSP00000333952.2"/>
    <property type="RefSeq nucleotide sequence ID" value="NM_178438.5"/>
    <property type="RefSeq protein sequence ID" value="NP_848525.1"/>
</dbReference>
<dbReference type="UCSC" id="uc001ezy.3">
    <property type="organism name" value="human"/>
</dbReference>
<dbReference type="AGR" id="HGNC:16614"/>
<dbReference type="CTD" id="254910"/>
<dbReference type="DisGeNET" id="254910"/>
<dbReference type="GeneCards" id="LCE5A"/>
<dbReference type="HGNC" id="HGNC:16614">
    <property type="gene designation" value="LCE5A"/>
</dbReference>
<dbReference type="HPA" id="ENSG00000186207">
    <property type="expression patterns" value="Tissue enriched (skin)"/>
</dbReference>
<dbReference type="MIM" id="612619">
    <property type="type" value="gene"/>
</dbReference>
<dbReference type="neXtProt" id="NX_Q5TCM9"/>
<dbReference type="OpenTargets" id="ENSG00000186207"/>
<dbReference type="PharmGKB" id="PA38173"/>
<dbReference type="VEuPathDB" id="HostDB:ENSG00000186207"/>
<dbReference type="eggNOG" id="ENOG502TEW5">
    <property type="taxonomic scope" value="Eukaryota"/>
</dbReference>
<dbReference type="GeneTree" id="ENSGT00940000161842"/>
<dbReference type="HOGENOM" id="CLU_152038_0_0_1"/>
<dbReference type="InParanoid" id="Q5TCM9"/>
<dbReference type="OMA" id="SHHNSGC"/>
<dbReference type="PAN-GO" id="Q5TCM9">
    <property type="GO annotations" value="0 GO annotations based on evolutionary models"/>
</dbReference>
<dbReference type="PathwayCommons" id="Q5TCM9"/>
<dbReference type="Reactome" id="R-HSA-6809371">
    <property type="pathway name" value="Formation of the cornified envelope"/>
</dbReference>
<dbReference type="SignaLink" id="Q5TCM9"/>
<dbReference type="BioGRID-ORCS" id="254910">
    <property type="hits" value="108 hits in 1116 CRISPR screens"/>
</dbReference>
<dbReference type="GenomeRNAi" id="254910"/>
<dbReference type="Pharos" id="Q5TCM9">
    <property type="development level" value="Tdark"/>
</dbReference>
<dbReference type="PRO" id="PR:Q5TCM9"/>
<dbReference type="Proteomes" id="UP000005640">
    <property type="component" value="Chromosome 1"/>
</dbReference>
<dbReference type="RNAct" id="Q5TCM9">
    <property type="molecule type" value="protein"/>
</dbReference>
<dbReference type="Bgee" id="ENSG00000186207">
    <property type="expression patterns" value="Expressed in skin of leg and 61 other cell types or tissues"/>
</dbReference>
<dbReference type="GO" id="GO:0042802">
    <property type="term" value="F:identical protein binding"/>
    <property type="evidence" value="ECO:0000353"/>
    <property type="project" value="IntAct"/>
</dbReference>
<dbReference type="GO" id="GO:0031424">
    <property type="term" value="P:keratinization"/>
    <property type="evidence" value="ECO:0007669"/>
    <property type="project" value="UniProtKB-KW"/>
</dbReference>
<dbReference type="InterPro" id="IPR028205">
    <property type="entry name" value="LCE"/>
</dbReference>
<dbReference type="Pfam" id="PF14672">
    <property type="entry name" value="LCE"/>
    <property type="match status" value="2"/>
</dbReference>
<dbReference type="PRINTS" id="PR00021">
    <property type="entry name" value="PRORICH"/>
</dbReference>
<gene>
    <name type="primary">LCE5A</name>
    <name type="synonym">LEP18</name>
    <name type="synonym">SPRL5A</name>
</gene>
<reference key="1">
    <citation type="journal article" date="2006" name="Nature">
        <title>The DNA sequence and biological annotation of human chromosome 1.</title>
        <authorList>
            <person name="Gregory S.G."/>
            <person name="Barlow K.F."/>
            <person name="McLay K.E."/>
            <person name="Kaul R."/>
            <person name="Swarbreck D."/>
            <person name="Dunham A."/>
            <person name="Scott C.E."/>
            <person name="Howe K.L."/>
            <person name="Woodfine K."/>
            <person name="Spencer C.C.A."/>
            <person name="Jones M.C."/>
            <person name="Gillson C."/>
            <person name="Searle S."/>
            <person name="Zhou Y."/>
            <person name="Kokocinski F."/>
            <person name="McDonald L."/>
            <person name="Evans R."/>
            <person name="Phillips K."/>
            <person name="Atkinson A."/>
            <person name="Cooper R."/>
            <person name="Jones C."/>
            <person name="Hall R.E."/>
            <person name="Andrews T.D."/>
            <person name="Lloyd C."/>
            <person name="Ainscough R."/>
            <person name="Almeida J.P."/>
            <person name="Ambrose K.D."/>
            <person name="Anderson F."/>
            <person name="Andrew R.W."/>
            <person name="Ashwell R.I.S."/>
            <person name="Aubin K."/>
            <person name="Babbage A.K."/>
            <person name="Bagguley C.L."/>
            <person name="Bailey J."/>
            <person name="Beasley H."/>
            <person name="Bethel G."/>
            <person name="Bird C.P."/>
            <person name="Bray-Allen S."/>
            <person name="Brown J.Y."/>
            <person name="Brown A.J."/>
            <person name="Buckley D."/>
            <person name="Burton J."/>
            <person name="Bye J."/>
            <person name="Carder C."/>
            <person name="Chapman J.C."/>
            <person name="Clark S.Y."/>
            <person name="Clarke G."/>
            <person name="Clee C."/>
            <person name="Cobley V."/>
            <person name="Collier R.E."/>
            <person name="Corby N."/>
            <person name="Coville G.J."/>
            <person name="Davies J."/>
            <person name="Deadman R."/>
            <person name="Dunn M."/>
            <person name="Earthrowl M."/>
            <person name="Ellington A.G."/>
            <person name="Errington H."/>
            <person name="Frankish A."/>
            <person name="Frankland J."/>
            <person name="French L."/>
            <person name="Garner P."/>
            <person name="Garnett J."/>
            <person name="Gay L."/>
            <person name="Ghori M.R.J."/>
            <person name="Gibson R."/>
            <person name="Gilby L.M."/>
            <person name="Gillett W."/>
            <person name="Glithero R.J."/>
            <person name="Grafham D.V."/>
            <person name="Griffiths C."/>
            <person name="Griffiths-Jones S."/>
            <person name="Grocock R."/>
            <person name="Hammond S."/>
            <person name="Harrison E.S.I."/>
            <person name="Hart E."/>
            <person name="Haugen E."/>
            <person name="Heath P.D."/>
            <person name="Holmes S."/>
            <person name="Holt K."/>
            <person name="Howden P.J."/>
            <person name="Hunt A.R."/>
            <person name="Hunt S.E."/>
            <person name="Hunter G."/>
            <person name="Isherwood J."/>
            <person name="James R."/>
            <person name="Johnson C."/>
            <person name="Johnson D."/>
            <person name="Joy A."/>
            <person name="Kay M."/>
            <person name="Kershaw J.K."/>
            <person name="Kibukawa M."/>
            <person name="Kimberley A.M."/>
            <person name="King A."/>
            <person name="Knights A.J."/>
            <person name="Lad H."/>
            <person name="Laird G."/>
            <person name="Lawlor S."/>
            <person name="Leongamornlert D.A."/>
            <person name="Lloyd D.M."/>
            <person name="Loveland J."/>
            <person name="Lovell J."/>
            <person name="Lush M.J."/>
            <person name="Lyne R."/>
            <person name="Martin S."/>
            <person name="Mashreghi-Mohammadi M."/>
            <person name="Matthews L."/>
            <person name="Matthews N.S.W."/>
            <person name="McLaren S."/>
            <person name="Milne S."/>
            <person name="Mistry S."/>
            <person name="Moore M.J.F."/>
            <person name="Nickerson T."/>
            <person name="O'Dell C.N."/>
            <person name="Oliver K."/>
            <person name="Palmeiri A."/>
            <person name="Palmer S.A."/>
            <person name="Parker A."/>
            <person name="Patel D."/>
            <person name="Pearce A.V."/>
            <person name="Peck A.I."/>
            <person name="Pelan S."/>
            <person name="Phelps K."/>
            <person name="Phillimore B.J."/>
            <person name="Plumb R."/>
            <person name="Rajan J."/>
            <person name="Raymond C."/>
            <person name="Rouse G."/>
            <person name="Saenphimmachak C."/>
            <person name="Sehra H.K."/>
            <person name="Sheridan E."/>
            <person name="Shownkeen R."/>
            <person name="Sims S."/>
            <person name="Skuce C.D."/>
            <person name="Smith M."/>
            <person name="Steward C."/>
            <person name="Subramanian S."/>
            <person name="Sycamore N."/>
            <person name="Tracey A."/>
            <person name="Tromans A."/>
            <person name="Van Helmond Z."/>
            <person name="Wall M."/>
            <person name="Wallis J.M."/>
            <person name="White S."/>
            <person name="Whitehead S.L."/>
            <person name="Wilkinson J.E."/>
            <person name="Willey D.L."/>
            <person name="Williams H."/>
            <person name="Wilming L."/>
            <person name="Wray P.W."/>
            <person name="Wu Z."/>
            <person name="Coulson A."/>
            <person name="Vaudin M."/>
            <person name="Sulston J.E."/>
            <person name="Durbin R.M."/>
            <person name="Hubbard T."/>
            <person name="Wooster R."/>
            <person name="Dunham I."/>
            <person name="Carter N.P."/>
            <person name="McVean G."/>
            <person name="Ross M.T."/>
            <person name="Harrow J."/>
            <person name="Olson M.V."/>
            <person name="Beck S."/>
            <person name="Rogers J."/>
            <person name="Bentley D.R."/>
        </authorList>
    </citation>
    <scope>NUCLEOTIDE SEQUENCE [LARGE SCALE GENOMIC DNA]</scope>
</reference>
<reference key="2">
    <citation type="journal article" date="2005" name="J. Invest. Dermatol.">
        <title>Late cornified envelope family in differentiating epithelia -- response to calcium and ultraviolet irradiation.</title>
        <authorList>
            <person name="Jackson B."/>
            <person name="Tilli C.L."/>
            <person name="Hardman M."/>
            <person name="Avilion A."/>
            <person name="Macleod M."/>
            <person name="Ashcroft G."/>
            <person name="Byrne C."/>
        </authorList>
    </citation>
    <scope>NOMENCLATURE</scope>
    <scope>TISSUE SPECIFICITY</scope>
</reference>
<reference key="3">
    <citation type="journal article" date="2023" name="J. Invest. Dermatol.">
        <title>CYSRT1: An Antimicrobial Epidermal Protein that Can Interact with Late Cornified Envelope Proteins.</title>
        <authorList>
            <person name="Niehues H."/>
            <person name="Rikken G."/>
            <person name="Kersten F.F.J."/>
            <person name="Eeftens J.M."/>
            <person name="van Vlijmen-Willems I.M.J.J."/>
            <person name="Rodijk-Olthuis D."/>
            <person name="Jansen P.A.M."/>
            <person name="Hendriks W.J.A.J."/>
            <person name="Ederveen T.H.A."/>
            <person name="Schalkwijk J."/>
            <person name="van den Bogaard E.H."/>
            <person name="Zeeuwen P.L.J.M."/>
        </authorList>
    </citation>
    <scope>INTERACTION WITH CYSRT1</scope>
</reference>
<keyword id="KW-0417">Keratinization</keyword>
<keyword id="KW-1267">Proteomics identification</keyword>
<keyword id="KW-1185">Reference proteome</keyword>
<accession>Q5TCM9</accession>